<reference key="1">
    <citation type="submission" date="2006-12" db="EMBL/GenBank/DDBJ databases">
        <title>Complete sequence of Shewanella amazonensis SB2B.</title>
        <authorList>
            <consortium name="US DOE Joint Genome Institute"/>
            <person name="Copeland A."/>
            <person name="Lucas S."/>
            <person name="Lapidus A."/>
            <person name="Barry K."/>
            <person name="Detter J.C."/>
            <person name="Glavina del Rio T."/>
            <person name="Hammon N."/>
            <person name="Israni S."/>
            <person name="Dalin E."/>
            <person name="Tice H."/>
            <person name="Pitluck S."/>
            <person name="Munk A.C."/>
            <person name="Brettin T."/>
            <person name="Bruce D."/>
            <person name="Han C."/>
            <person name="Tapia R."/>
            <person name="Gilna P."/>
            <person name="Schmutz J."/>
            <person name="Larimer F."/>
            <person name="Land M."/>
            <person name="Hauser L."/>
            <person name="Kyrpides N."/>
            <person name="Mikhailova N."/>
            <person name="Fredrickson J."/>
            <person name="Richardson P."/>
        </authorList>
    </citation>
    <scope>NUCLEOTIDE SEQUENCE [LARGE SCALE GENOMIC DNA]</scope>
    <source>
        <strain>ATCC BAA-1098 / SB2B</strain>
    </source>
</reference>
<keyword id="KW-1185">Reference proteome</keyword>
<keyword id="KW-0687">Ribonucleoprotein</keyword>
<keyword id="KW-0689">Ribosomal protein</keyword>
<keyword id="KW-0694">RNA-binding</keyword>
<keyword id="KW-0699">rRNA-binding</keyword>
<name>RS8_SHEAM</name>
<comment type="function">
    <text evidence="1">One of the primary rRNA binding proteins, it binds directly to 16S rRNA central domain where it helps coordinate assembly of the platform of the 30S subunit.</text>
</comment>
<comment type="subunit">
    <text evidence="1">Part of the 30S ribosomal subunit. Contacts proteins S5 and S12.</text>
</comment>
<comment type="similarity">
    <text evidence="1">Belongs to the universal ribosomal protein uS8 family.</text>
</comment>
<sequence length="131" mass="14131">MSMQDPIADMLTRIRNGQAANKVSVKMPSAKLKVAIAKLLKDEGYITDYAVASEGNKAELEVTLKYFQGRPVVETIQRVSRPGLRIYKGKDELPKVMGGLGIAIVSTSKGLMTDRAARLAGMGGEVICYVA</sequence>
<evidence type="ECO:0000255" key="1">
    <source>
        <dbReference type="HAMAP-Rule" id="MF_01302"/>
    </source>
</evidence>
<evidence type="ECO:0000305" key="2"/>
<dbReference type="EMBL" id="CP000507">
    <property type="protein sequence ID" value="ABL98438.1"/>
    <property type="molecule type" value="Genomic_DNA"/>
</dbReference>
<dbReference type="RefSeq" id="WP_011758348.1">
    <property type="nucleotide sequence ID" value="NC_008700.1"/>
</dbReference>
<dbReference type="SMR" id="A1S232"/>
<dbReference type="STRING" id="326297.Sama_0227"/>
<dbReference type="KEGG" id="saz:Sama_0227"/>
<dbReference type="eggNOG" id="COG0096">
    <property type="taxonomic scope" value="Bacteria"/>
</dbReference>
<dbReference type="HOGENOM" id="CLU_098428_0_0_6"/>
<dbReference type="OrthoDB" id="9802617at2"/>
<dbReference type="Proteomes" id="UP000009175">
    <property type="component" value="Chromosome"/>
</dbReference>
<dbReference type="GO" id="GO:1990904">
    <property type="term" value="C:ribonucleoprotein complex"/>
    <property type="evidence" value="ECO:0007669"/>
    <property type="project" value="UniProtKB-KW"/>
</dbReference>
<dbReference type="GO" id="GO:0005840">
    <property type="term" value="C:ribosome"/>
    <property type="evidence" value="ECO:0007669"/>
    <property type="project" value="UniProtKB-KW"/>
</dbReference>
<dbReference type="GO" id="GO:0019843">
    <property type="term" value="F:rRNA binding"/>
    <property type="evidence" value="ECO:0007669"/>
    <property type="project" value="UniProtKB-UniRule"/>
</dbReference>
<dbReference type="GO" id="GO:0003735">
    <property type="term" value="F:structural constituent of ribosome"/>
    <property type="evidence" value="ECO:0007669"/>
    <property type="project" value="InterPro"/>
</dbReference>
<dbReference type="GO" id="GO:0006412">
    <property type="term" value="P:translation"/>
    <property type="evidence" value="ECO:0007669"/>
    <property type="project" value="UniProtKB-UniRule"/>
</dbReference>
<dbReference type="FunFam" id="3.30.1370.30:FF:000003">
    <property type="entry name" value="30S ribosomal protein S8"/>
    <property type="match status" value="1"/>
</dbReference>
<dbReference type="FunFam" id="3.30.1490.10:FF:000001">
    <property type="entry name" value="30S ribosomal protein S8"/>
    <property type="match status" value="1"/>
</dbReference>
<dbReference type="Gene3D" id="3.30.1370.30">
    <property type="match status" value="1"/>
</dbReference>
<dbReference type="Gene3D" id="3.30.1490.10">
    <property type="match status" value="1"/>
</dbReference>
<dbReference type="HAMAP" id="MF_01302_B">
    <property type="entry name" value="Ribosomal_uS8_B"/>
    <property type="match status" value="1"/>
</dbReference>
<dbReference type="InterPro" id="IPR000630">
    <property type="entry name" value="Ribosomal_uS8"/>
</dbReference>
<dbReference type="InterPro" id="IPR047863">
    <property type="entry name" value="Ribosomal_uS8_CS"/>
</dbReference>
<dbReference type="InterPro" id="IPR035987">
    <property type="entry name" value="Ribosomal_uS8_sf"/>
</dbReference>
<dbReference type="NCBIfam" id="NF001109">
    <property type="entry name" value="PRK00136.1"/>
    <property type="match status" value="1"/>
</dbReference>
<dbReference type="PANTHER" id="PTHR11758">
    <property type="entry name" value="40S RIBOSOMAL PROTEIN S15A"/>
    <property type="match status" value="1"/>
</dbReference>
<dbReference type="Pfam" id="PF00410">
    <property type="entry name" value="Ribosomal_S8"/>
    <property type="match status" value="1"/>
</dbReference>
<dbReference type="SUPFAM" id="SSF56047">
    <property type="entry name" value="Ribosomal protein S8"/>
    <property type="match status" value="1"/>
</dbReference>
<dbReference type="PROSITE" id="PS00053">
    <property type="entry name" value="RIBOSOMAL_S8"/>
    <property type="match status" value="1"/>
</dbReference>
<protein>
    <recommendedName>
        <fullName evidence="1">Small ribosomal subunit protein uS8</fullName>
    </recommendedName>
    <alternativeName>
        <fullName evidence="2">30S ribosomal protein S8</fullName>
    </alternativeName>
</protein>
<organism>
    <name type="scientific">Shewanella amazonensis (strain ATCC BAA-1098 / SB2B)</name>
    <dbReference type="NCBI Taxonomy" id="326297"/>
    <lineage>
        <taxon>Bacteria</taxon>
        <taxon>Pseudomonadati</taxon>
        <taxon>Pseudomonadota</taxon>
        <taxon>Gammaproteobacteria</taxon>
        <taxon>Alteromonadales</taxon>
        <taxon>Shewanellaceae</taxon>
        <taxon>Shewanella</taxon>
    </lineage>
</organism>
<gene>
    <name evidence="1" type="primary">rpsH</name>
    <name type="ordered locus">Sama_0227</name>
</gene>
<feature type="chain" id="PRO_0000290925" description="Small ribosomal subunit protein uS8">
    <location>
        <begin position="1"/>
        <end position="131"/>
    </location>
</feature>
<proteinExistence type="inferred from homology"/>
<accession>A1S232</accession>